<evidence type="ECO:0000255" key="1">
    <source>
        <dbReference type="HAMAP-Rule" id="MF_01077"/>
    </source>
</evidence>
<reference key="1">
    <citation type="journal article" date="2004" name="Proc. Natl. Acad. Sci. U.S.A.">
        <title>Complete genomes of two clinical Staphylococcus aureus strains: evidence for the rapid evolution of virulence and drug resistance.</title>
        <authorList>
            <person name="Holden M.T.G."/>
            <person name="Feil E.J."/>
            <person name="Lindsay J.A."/>
            <person name="Peacock S.J."/>
            <person name="Day N.P.J."/>
            <person name="Enright M.C."/>
            <person name="Foster T.J."/>
            <person name="Moore C.E."/>
            <person name="Hurst L."/>
            <person name="Atkin R."/>
            <person name="Barron A."/>
            <person name="Bason N."/>
            <person name="Bentley S.D."/>
            <person name="Chillingworth C."/>
            <person name="Chillingworth T."/>
            <person name="Churcher C."/>
            <person name="Clark L."/>
            <person name="Corton C."/>
            <person name="Cronin A."/>
            <person name="Doggett J."/>
            <person name="Dowd L."/>
            <person name="Feltwell T."/>
            <person name="Hance Z."/>
            <person name="Harris B."/>
            <person name="Hauser H."/>
            <person name="Holroyd S."/>
            <person name="Jagels K."/>
            <person name="James K.D."/>
            <person name="Lennard N."/>
            <person name="Line A."/>
            <person name="Mayes R."/>
            <person name="Moule S."/>
            <person name="Mungall K."/>
            <person name="Ormond D."/>
            <person name="Quail M.A."/>
            <person name="Rabbinowitsch E."/>
            <person name="Rutherford K.M."/>
            <person name="Sanders M."/>
            <person name="Sharp S."/>
            <person name="Simmonds M."/>
            <person name="Stevens K."/>
            <person name="Whitehead S."/>
            <person name="Barrell B.G."/>
            <person name="Spratt B.G."/>
            <person name="Parkhill J."/>
        </authorList>
    </citation>
    <scope>NUCLEOTIDE SEQUENCE [LARGE SCALE GENOMIC DNA]</scope>
    <source>
        <strain>MRSA252</strain>
    </source>
</reference>
<gene>
    <name evidence="1" type="primary">rimP</name>
    <name type="ordered locus">SAR1241</name>
</gene>
<comment type="function">
    <text evidence="1">Required for maturation of 30S ribosomal subunits.</text>
</comment>
<comment type="subcellular location">
    <subcellularLocation>
        <location evidence="1">Cytoplasm</location>
    </subcellularLocation>
</comment>
<comment type="similarity">
    <text evidence="1">Belongs to the RimP family.</text>
</comment>
<protein>
    <recommendedName>
        <fullName evidence="1">Ribosome maturation factor RimP</fullName>
    </recommendedName>
</protein>
<proteinExistence type="inferred from homology"/>
<keyword id="KW-0963">Cytoplasm</keyword>
<keyword id="KW-0690">Ribosome biogenesis</keyword>
<organism>
    <name type="scientific">Staphylococcus aureus (strain MRSA252)</name>
    <dbReference type="NCBI Taxonomy" id="282458"/>
    <lineage>
        <taxon>Bacteria</taxon>
        <taxon>Bacillati</taxon>
        <taxon>Bacillota</taxon>
        <taxon>Bacilli</taxon>
        <taxon>Bacillales</taxon>
        <taxon>Staphylococcaceae</taxon>
        <taxon>Staphylococcus</taxon>
    </lineage>
</organism>
<name>RIMP_STAAR</name>
<dbReference type="EMBL" id="BX571856">
    <property type="protein sequence ID" value="CAG40243.1"/>
    <property type="molecule type" value="Genomic_DNA"/>
</dbReference>
<dbReference type="RefSeq" id="WP_000036631.1">
    <property type="nucleotide sequence ID" value="NC_002952.2"/>
</dbReference>
<dbReference type="SMR" id="Q6GHH0"/>
<dbReference type="KEGG" id="sar:SAR1241"/>
<dbReference type="HOGENOM" id="CLU_070525_2_0_9"/>
<dbReference type="Proteomes" id="UP000000596">
    <property type="component" value="Chromosome"/>
</dbReference>
<dbReference type="GO" id="GO:0005829">
    <property type="term" value="C:cytosol"/>
    <property type="evidence" value="ECO:0007669"/>
    <property type="project" value="TreeGrafter"/>
</dbReference>
<dbReference type="GO" id="GO:0000028">
    <property type="term" value="P:ribosomal small subunit assembly"/>
    <property type="evidence" value="ECO:0007669"/>
    <property type="project" value="TreeGrafter"/>
</dbReference>
<dbReference type="GO" id="GO:0006412">
    <property type="term" value="P:translation"/>
    <property type="evidence" value="ECO:0007669"/>
    <property type="project" value="TreeGrafter"/>
</dbReference>
<dbReference type="CDD" id="cd01734">
    <property type="entry name" value="YlxS_C"/>
    <property type="match status" value="1"/>
</dbReference>
<dbReference type="FunFam" id="3.30.300.70:FF:000001">
    <property type="entry name" value="Ribosome maturation factor RimP"/>
    <property type="match status" value="1"/>
</dbReference>
<dbReference type="Gene3D" id="2.30.30.180">
    <property type="entry name" value="Ribosome maturation factor RimP, C-terminal domain"/>
    <property type="match status" value="1"/>
</dbReference>
<dbReference type="Gene3D" id="3.30.300.70">
    <property type="entry name" value="RimP-like superfamily, N-terminal"/>
    <property type="match status" value="1"/>
</dbReference>
<dbReference type="HAMAP" id="MF_01077">
    <property type="entry name" value="RimP"/>
    <property type="match status" value="1"/>
</dbReference>
<dbReference type="InterPro" id="IPR003728">
    <property type="entry name" value="Ribosome_maturation_RimP"/>
</dbReference>
<dbReference type="InterPro" id="IPR028998">
    <property type="entry name" value="RimP_C"/>
</dbReference>
<dbReference type="InterPro" id="IPR036847">
    <property type="entry name" value="RimP_C_sf"/>
</dbReference>
<dbReference type="InterPro" id="IPR028989">
    <property type="entry name" value="RimP_N"/>
</dbReference>
<dbReference type="InterPro" id="IPR035956">
    <property type="entry name" value="RimP_N_sf"/>
</dbReference>
<dbReference type="NCBIfam" id="NF000928">
    <property type="entry name" value="PRK00092.1-2"/>
    <property type="match status" value="1"/>
</dbReference>
<dbReference type="PANTHER" id="PTHR33867">
    <property type="entry name" value="RIBOSOME MATURATION FACTOR RIMP"/>
    <property type="match status" value="1"/>
</dbReference>
<dbReference type="PANTHER" id="PTHR33867:SF1">
    <property type="entry name" value="RIBOSOME MATURATION FACTOR RIMP"/>
    <property type="match status" value="1"/>
</dbReference>
<dbReference type="Pfam" id="PF17384">
    <property type="entry name" value="DUF150_C"/>
    <property type="match status" value="1"/>
</dbReference>
<dbReference type="Pfam" id="PF02576">
    <property type="entry name" value="RimP_N"/>
    <property type="match status" value="1"/>
</dbReference>
<dbReference type="SUPFAM" id="SSF74942">
    <property type="entry name" value="YhbC-like, C-terminal domain"/>
    <property type="match status" value="1"/>
</dbReference>
<dbReference type="SUPFAM" id="SSF75420">
    <property type="entry name" value="YhbC-like, N-terminal domain"/>
    <property type="match status" value="1"/>
</dbReference>
<feature type="chain" id="PRO_0000181922" description="Ribosome maturation factor RimP">
    <location>
        <begin position="1"/>
        <end position="155"/>
    </location>
</feature>
<sequence>MSKITEQVEVIVKPIMEDLNFELVDVEYVKEGRDHFLRISIDKEGGVDLNDCTLASEKISEAMDANDPIPEMYYLDVASPGAERPIKKEQDFQNAITKPVFVSLYVPIEGEKEWLGILQEVNNETIVVQVKIKARTKDIEIPRDKIAKARHAVMI</sequence>
<accession>Q6GHH0</accession>